<sequence length="695" mass="77298">MFLGTGEPALDTGDDSLSAVTFDSDVETKAKRKAFHKPPPTSPKSPYLSKPRKVASWRSLRTAGSMPLGGRASLTPQKLWLGTAKPGSLTQALNSPLTWEHAWTGVPGGTPDCLTDTFRVKRPHLRRSASNGHVPGTPVYREKEDMYDEIIELKKSLHVQKSDVDLMRTKLRRLEEENSRKDRQIEQLLDPSRGTDFVRTLAEKRPDASWVINGLKQRILKLEQQCKEKDGTISKLQTDMKTTNLEEMRIAMETYYEEVHRLQTLLASSETTGKKPLGEKKTGAKRQKKMGSALLSLSRSVQELTEENQSLKEDLDRVLSTSPTISKTQGYVEWSKPRLLRRIVELEKKLSVMESSKSHAAEPVRSHPPACLASSSALHRQPRGDRNKDHERLRGAVRDLKEERTALQEQLLQRDLEVKQLLQAKADLEKELECAREGEEERREREEVLREEIQTLTSKLQELQEMKKEEKEDCPEVPHKAQELPAPTPSSRHCEQDWPPDSSEEGLPRPRSPCSDGRRDAAARVLQAQWKVYKHKKKKAVLDEAAVVLQAAFRGHLTRTKLLASKAHGSEPPSVPGLPDQSSPVPRVPSPIAQATGSPVQEEAIVIIQSALRAHLARARHSATGKRTTTAASTRRRSASATHGDASSPPFLAALPDPSPSGPQALAPLPGDDVNSDDSDDIVIAPSLPTKNFPV</sequence>
<organism>
    <name type="scientific">Homo sapiens</name>
    <name type="common">Human</name>
    <dbReference type="NCBI Taxonomy" id="9606"/>
    <lineage>
        <taxon>Eukaryota</taxon>
        <taxon>Metazoa</taxon>
        <taxon>Chordata</taxon>
        <taxon>Craniata</taxon>
        <taxon>Vertebrata</taxon>
        <taxon>Euteleostomi</taxon>
        <taxon>Mammalia</taxon>
        <taxon>Eutheria</taxon>
        <taxon>Euarchontoglires</taxon>
        <taxon>Primates</taxon>
        <taxon>Haplorrhini</taxon>
        <taxon>Catarrhini</taxon>
        <taxon>Hominidae</taxon>
        <taxon>Homo</taxon>
    </lineage>
</organism>
<name>IQCE_HUMAN</name>
<protein>
    <recommendedName>
        <fullName>IQ domain-containing protein E</fullName>
    </recommendedName>
</protein>
<evidence type="ECO:0000250" key="1">
    <source>
        <dbReference type="UniProtKB" id="Q6PCQ0"/>
    </source>
</evidence>
<evidence type="ECO:0000255" key="2"/>
<evidence type="ECO:0000255" key="3">
    <source>
        <dbReference type="PROSITE-ProRule" id="PRU00116"/>
    </source>
</evidence>
<evidence type="ECO:0000256" key="4">
    <source>
        <dbReference type="SAM" id="MobiDB-lite"/>
    </source>
</evidence>
<evidence type="ECO:0000269" key="5">
    <source>
    </source>
</evidence>
<evidence type="ECO:0000269" key="6">
    <source>
    </source>
</evidence>
<evidence type="ECO:0000303" key="7">
    <source>
    </source>
</evidence>
<evidence type="ECO:0000303" key="8">
    <source>
    </source>
</evidence>
<evidence type="ECO:0000303" key="9">
    <source>
    </source>
</evidence>
<evidence type="ECO:0000305" key="10"/>
<accession>Q6IPM2</accession>
<accession>Q4G0P7</accession>
<accession>Q6P7T4</accession>
<accession>Q9H0H7</accession>
<accession>Q9UPX7</accession>
<comment type="function">
    <text evidence="1 6">Component of the EvC complex that positively regulates ciliary Hedgehog (Hh) signaling (By similarity). Required for proper limb morphogenesis (PubMed:28488682).</text>
</comment>
<comment type="subunit">
    <text evidence="1">Component of the EvC complex composed of EFCAB7, IQCE, EVC2 and EVC; built from two subcomplexes, EVC2:EVC and EFCAB7:IQCE. Interacts (via N-terminus) with EFCAB7 (via EF-hands 1 and 2); this interaction anchors the EVC-EVC2 complex in a signaling microdomain at the base of cilia and stimulates the Hedgehog (Hh) pathway. Interacts with EVC2 (via N-terminal end). Interacts with EVC.</text>
</comment>
<comment type="interaction">
    <interactant intactId="EBI-3893098">
        <id>Q6IPM2</id>
    </interactant>
    <interactant intactId="EBI-347538">
        <id>Q9Y4H4</id>
        <label>GPSM3</label>
    </interactant>
    <organismsDiffer>false</organismsDiffer>
    <experiments>3</experiments>
</comment>
<comment type="interaction">
    <interactant intactId="EBI-3893098">
        <id>Q6IPM2</id>
    </interactant>
    <interactant intactId="EBI-10171450">
        <id>B4DJ51</id>
        <label>HEL-S-72</label>
    </interactant>
    <organismsDiffer>false</organismsDiffer>
    <experiments>3</experiments>
</comment>
<comment type="interaction">
    <interactant intactId="EBI-3893098">
        <id>Q6IPM2</id>
    </interactant>
    <interactant intactId="EBI-352986">
        <id>P52597</id>
        <label>HNRNPF</label>
    </interactant>
    <organismsDiffer>false</organismsDiffer>
    <experiments>3</experiments>
</comment>
<comment type="interaction">
    <interactant intactId="EBI-3893098">
        <id>Q6IPM2</id>
    </interactant>
    <interactant intactId="EBI-348380">
        <id>P25788</id>
        <label>PSMA3</label>
    </interactant>
    <organismsDiffer>false</organismsDiffer>
    <experiments>4</experiments>
</comment>
<comment type="interaction">
    <interactant intactId="EBI-3893098">
        <id>Q6IPM2</id>
    </interactant>
    <interactant intactId="EBI-9090990">
        <id>Q5W5X9-3</id>
        <label>TTC23</label>
    </interactant>
    <organismsDiffer>false</organismsDiffer>
    <experiments>3</experiments>
</comment>
<comment type="interaction">
    <interactant intactId="EBI-3893098">
        <id>Q6IPM2</id>
    </interactant>
    <interactant intactId="EBI-8656864">
        <id>Q6PF05</id>
        <label>TTC23L</label>
    </interactant>
    <organismsDiffer>false</organismsDiffer>
    <experiments>3</experiments>
</comment>
<comment type="interaction">
    <interactant intactId="EBI-3893098">
        <id>Q6IPM2</id>
    </interactant>
    <interactant intactId="EBI-10296986">
        <id>Q9BRL5</id>
    </interactant>
    <organismsDiffer>false</organismsDiffer>
    <experiments>3</experiments>
</comment>
<comment type="subcellular location">
    <subcellularLocation>
        <location evidence="1">Cell projection</location>
        <location evidence="1">Cilium membrane</location>
        <topology evidence="1">Peripheral membrane protein</topology>
        <orientation evidence="1">Cytoplasmic side</orientation>
    </subcellularLocation>
    <text evidence="1">The EvC complex localizes at the base of cilia in the EvC zone of primary cilia in a EFCAB7-dependent manner.</text>
</comment>
<comment type="alternative products">
    <event type="alternative splicing"/>
    <isoform>
        <id>Q6IPM2-1</id>
        <name>1</name>
        <sequence type="displayed"/>
    </isoform>
    <isoform>
        <id>Q6IPM2-2</id>
        <name>2</name>
        <sequence type="described" ref="VSP_024433"/>
    </isoform>
    <isoform>
        <id>Q6IPM2-3</id>
        <name>3</name>
        <sequence type="described" ref="VSP_024435"/>
    </isoform>
    <isoform>
        <id>Q6IPM2-4</id>
        <name>4</name>
        <sequence type="described" ref="VSP_024434"/>
    </isoform>
</comment>
<comment type="disease" evidence="6">
    <disease id="DI-05052">
        <name>Polydactyly, postaxial, A7</name>
        <acronym>PAPA7</acronym>
        <description>A form of postaxial polydactyly, a condition characterized by the occurrence of supernumerary digits in the upper and/or lower extremities. In postaxial polydactyly type A, the extra digit is well-formed and articulates with the fifth or a sixth metacarpal/metatarsal. PAPA7 is an autosomal recessive condition characterized by postaxial polydactyly restricted to the feet.</description>
        <dbReference type="MIM" id="617642"/>
    </disease>
    <text>The disease may be caused by variants affecting the gene represented in this entry.</text>
</comment>
<comment type="sequence caution" evidence="10">
    <conflict type="erroneous initiation">
        <sequence resource="EMBL-CDS" id="BAA82975"/>
    </conflict>
</comment>
<feature type="chain" id="PRO_0000284110" description="IQ domain-containing protein E">
    <location>
        <begin position="1"/>
        <end position="695"/>
    </location>
</feature>
<feature type="domain" description="IQ 1" evidence="3">
    <location>
        <begin position="542"/>
        <end position="571"/>
    </location>
</feature>
<feature type="domain" description="IQ 2" evidence="3">
    <location>
        <begin position="601"/>
        <end position="630"/>
    </location>
</feature>
<feature type="region of interest" description="Disordered" evidence="4">
    <location>
        <begin position="29"/>
        <end position="55"/>
    </location>
</feature>
<feature type="region of interest" description="Disordered" evidence="4">
    <location>
        <begin position="357"/>
        <end position="390"/>
    </location>
</feature>
<feature type="region of interest" description="Disordered" evidence="4">
    <location>
        <begin position="465"/>
        <end position="521"/>
    </location>
</feature>
<feature type="region of interest" description="Disordered" evidence="4">
    <location>
        <begin position="564"/>
        <end position="599"/>
    </location>
</feature>
<feature type="region of interest" description="Disordered" evidence="4">
    <location>
        <begin position="618"/>
        <end position="695"/>
    </location>
</feature>
<feature type="coiled-coil region" evidence="2">
    <location>
        <begin position="157"/>
        <end position="264"/>
    </location>
</feature>
<feature type="coiled-coil region" evidence="2">
    <location>
        <begin position="292"/>
        <end position="358"/>
    </location>
</feature>
<feature type="coiled-coil region" evidence="2">
    <location>
        <begin position="387"/>
        <end position="477"/>
    </location>
</feature>
<feature type="compositionally biased region" description="Basic and acidic residues" evidence="4">
    <location>
        <begin position="465"/>
        <end position="482"/>
    </location>
</feature>
<feature type="modified residue" description="Phosphoserine" evidence="1">
    <location>
        <position position="322"/>
    </location>
</feature>
<feature type="splice variant" id="VSP_024433" description="In isoform 2." evidence="7 9">
    <location>
        <begin position="1"/>
        <end position="65"/>
    </location>
</feature>
<feature type="splice variant" id="VSP_024434" description="In isoform 4." evidence="9">
    <location>
        <begin position="12"/>
        <end position="27"/>
    </location>
</feature>
<feature type="splice variant" id="VSP_024435" description="In isoform 3." evidence="8">
    <original>GDDSLSAVTFDSDVETKAKRKAFHKPPPTSPKSPYLSKPRKVASWRSLRTAGSMPLGG</original>
    <variation>SHLISLS</variation>
    <location>
        <begin position="13"/>
        <end position="70"/>
    </location>
</feature>
<feature type="sequence variant" id="VAR_031697" description="In dbSNP:rs11976972.">
    <original>H</original>
    <variation>N</variation>
    <location>
        <position position="101"/>
    </location>
</feature>
<feature type="sequence variant" id="VAR_031698" description="In dbSNP:rs2293404.">
    <original>A</original>
    <variation>V</variation>
    <location>
        <position position="546"/>
    </location>
</feature>
<feature type="sequence variant" id="VAR_031699" description="In dbSNP:rs10950797.">
    <original>R</original>
    <variation>H</variation>
    <location>
        <position position="587"/>
    </location>
</feature>
<feature type="sequence variant" id="VAR_031700" description="In dbSNP:rs2293407.">
    <original>T</original>
    <variation>A</variation>
    <location>
        <position position="596"/>
    </location>
</feature>
<feature type="sequence variant" id="VAR_031701" description="In dbSNP:rs3735109." evidence="5">
    <original>L</original>
    <variation>V</variation>
    <location>
        <position position="666"/>
    </location>
</feature>
<feature type="sequence variant" id="VAR_031702" description="In dbSNP:rs1061566." evidence="5">
    <original>T</original>
    <variation>M</variation>
    <location>
        <position position="690"/>
    </location>
</feature>
<feature type="sequence conflict" description="In Ref. 4; AAH43150." evidence="10" ref="4">
    <original>F</original>
    <variation>L</variation>
    <location>
        <position position="197"/>
    </location>
</feature>
<feature type="sequence conflict" description="In Ref. 4; AAH71858." evidence="10" ref="4">
    <original>S</original>
    <variation>R</variation>
    <location>
        <position position="234"/>
    </location>
</feature>
<feature type="sequence conflict" description="In Ref. 4; AAH71858." evidence="10" ref="4">
    <original>P</original>
    <variation>S</variation>
    <location>
        <position position="579"/>
    </location>
</feature>
<proteinExistence type="evidence at protein level"/>
<gene>
    <name type="primary">IQCE</name>
    <name type="synonym">KIAA1023</name>
</gene>
<keyword id="KW-0025">Alternative splicing</keyword>
<keyword id="KW-1003">Cell membrane</keyword>
<keyword id="KW-0966">Cell projection</keyword>
<keyword id="KW-0175">Coiled coil</keyword>
<keyword id="KW-0472">Membrane</keyword>
<keyword id="KW-0597">Phosphoprotein</keyword>
<keyword id="KW-1267">Proteomics identification</keyword>
<keyword id="KW-1185">Reference proteome</keyword>
<keyword id="KW-0677">Repeat</keyword>
<dbReference type="EMBL" id="AB028946">
    <property type="protein sequence ID" value="BAA82975.2"/>
    <property type="status" value="ALT_INIT"/>
    <property type="molecule type" value="mRNA"/>
</dbReference>
<dbReference type="EMBL" id="AL136792">
    <property type="protein sequence ID" value="CAB66726.1"/>
    <property type="molecule type" value="mRNA"/>
</dbReference>
<dbReference type="EMBL" id="BC043150">
    <property type="protein sequence ID" value="AAH43150.1"/>
    <property type="molecule type" value="mRNA"/>
</dbReference>
<dbReference type="EMBL" id="BC061518">
    <property type="protein sequence ID" value="AAH61518.1"/>
    <property type="status" value="ALT_TERM"/>
    <property type="molecule type" value="mRNA"/>
</dbReference>
<dbReference type="EMBL" id="BC071858">
    <property type="protein sequence ID" value="AAH71858.1"/>
    <property type="molecule type" value="mRNA"/>
</dbReference>
<dbReference type="CCDS" id="CCDS43542.1">
    <molecule id="Q6IPM2-1"/>
</dbReference>
<dbReference type="CCDS" id="CCDS75560.1">
    <molecule id="Q6IPM2-2"/>
</dbReference>
<dbReference type="CCDS" id="CCDS94047.1">
    <molecule id="Q6IPM2-4"/>
</dbReference>
<dbReference type="RefSeq" id="NP_001274430.1">
    <molecule id="Q6IPM2-2"/>
    <property type="nucleotide sequence ID" value="NM_001287501.2"/>
</dbReference>
<dbReference type="RefSeq" id="NP_001397794.1">
    <molecule id="Q6IPM2-4"/>
    <property type="nucleotide sequence ID" value="NM_001410865.1"/>
</dbReference>
<dbReference type="RefSeq" id="NP_689771.3">
    <molecule id="Q6IPM2-1"/>
    <property type="nucleotide sequence ID" value="NM_152558.4"/>
</dbReference>
<dbReference type="RefSeq" id="XP_016867392.1">
    <molecule id="Q6IPM2-2"/>
    <property type="nucleotide sequence ID" value="XM_017011903.2"/>
</dbReference>
<dbReference type="SMR" id="Q6IPM2"/>
<dbReference type="BioGRID" id="116886">
    <property type="interactions" value="36"/>
</dbReference>
<dbReference type="FunCoup" id="Q6IPM2">
    <property type="interactions" value="328"/>
</dbReference>
<dbReference type="IntAct" id="Q6IPM2">
    <property type="interactions" value="27"/>
</dbReference>
<dbReference type="STRING" id="9606.ENSP00000480715"/>
<dbReference type="GlyGen" id="Q6IPM2">
    <property type="glycosylation" value="3 sites, 1 O-linked glycan (2 sites)"/>
</dbReference>
<dbReference type="iPTMnet" id="Q6IPM2"/>
<dbReference type="PhosphoSitePlus" id="Q6IPM2"/>
<dbReference type="BioMuta" id="IQCE"/>
<dbReference type="DMDM" id="145566781"/>
<dbReference type="jPOST" id="Q6IPM2"/>
<dbReference type="MassIVE" id="Q6IPM2"/>
<dbReference type="PaxDb" id="9606-ENSP00000480715"/>
<dbReference type="PeptideAtlas" id="Q6IPM2"/>
<dbReference type="ProteomicsDB" id="66451">
    <molecule id="Q6IPM2-1"/>
</dbReference>
<dbReference type="ProteomicsDB" id="66452">
    <molecule id="Q6IPM2-2"/>
</dbReference>
<dbReference type="ProteomicsDB" id="66453">
    <molecule id="Q6IPM2-3"/>
</dbReference>
<dbReference type="ProteomicsDB" id="66454">
    <molecule id="Q6IPM2-4"/>
</dbReference>
<dbReference type="TopDownProteomics" id="Q6IPM2-1">
    <molecule id="Q6IPM2-1"/>
</dbReference>
<dbReference type="Antibodypedia" id="5701">
    <property type="antibodies" value="67 antibodies from 15 providers"/>
</dbReference>
<dbReference type="DNASU" id="23288"/>
<dbReference type="Ensembl" id="ENST00000325979.11">
    <molecule id="Q6IPM2-2"/>
    <property type="protein sequence ID" value="ENSP00000313772.7"/>
    <property type="gene ID" value="ENSG00000106012.19"/>
</dbReference>
<dbReference type="Ensembl" id="ENST00000402050.7">
    <molecule id="Q6IPM2-1"/>
    <property type="protein sequence ID" value="ENSP00000385597.2"/>
    <property type="gene ID" value="ENSG00000106012.19"/>
</dbReference>
<dbReference type="Ensembl" id="ENST00000438376.6">
    <molecule id="Q6IPM2-4"/>
    <property type="protein sequence ID" value="ENSP00000396178.2"/>
    <property type="gene ID" value="ENSG00000106012.19"/>
</dbReference>
<dbReference type="Ensembl" id="ENST00000623361.3">
    <molecule id="Q6IPM2-2"/>
    <property type="protein sequence ID" value="ENSP00000485601.1"/>
    <property type="gene ID" value="ENSG00000106012.19"/>
</dbReference>
<dbReference type="GeneID" id="23288"/>
<dbReference type="KEGG" id="hsa:23288"/>
<dbReference type="MANE-Select" id="ENST00000402050.7">
    <property type="protein sequence ID" value="ENSP00000385597.2"/>
    <property type="RefSeq nucleotide sequence ID" value="NM_152558.5"/>
    <property type="RefSeq protein sequence ID" value="NP_689771.3"/>
</dbReference>
<dbReference type="UCSC" id="uc003smn.6">
    <molecule id="Q6IPM2-1"/>
    <property type="organism name" value="human"/>
</dbReference>
<dbReference type="AGR" id="HGNC:29171"/>
<dbReference type="CTD" id="23288"/>
<dbReference type="DisGeNET" id="23288"/>
<dbReference type="GeneCards" id="IQCE"/>
<dbReference type="HGNC" id="HGNC:29171">
    <property type="gene designation" value="IQCE"/>
</dbReference>
<dbReference type="HPA" id="ENSG00000106012">
    <property type="expression patterns" value="Low tissue specificity"/>
</dbReference>
<dbReference type="MalaCards" id="IQCE"/>
<dbReference type="MIM" id="617631">
    <property type="type" value="gene"/>
</dbReference>
<dbReference type="MIM" id="617642">
    <property type="type" value="phenotype"/>
</dbReference>
<dbReference type="neXtProt" id="NX_Q6IPM2"/>
<dbReference type="OpenTargets" id="ENSG00000106012"/>
<dbReference type="Orphanet" id="93334">
    <property type="disease" value="Postaxial polydactyly type A"/>
</dbReference>
<dbReference type="PharmGKB" id="PA134894706"/>
<dbReference type="VEuPathDB" id="HostDB:ENSG00000106012"/>
<dbReference type="eggNOG" id="ENOG502QUCA">
    <property type="taxonomic scope" value="Eukaryota"/>
</dbReference>
<dbReference type="GeneTree" id="ENSGT00940000156018"/>
<dbReference type="HOGENOM" id="CLU_015416_1_0_1"/>
<dbReference type="InParanoid" id="Q6IPM2"/>
<dbReference type="OMA" id="TLISKCQ"/>
<dbReference type="OrthoDB" id="2136082at2759"/>
<dbReference type="PAN-GO" id="Q6IPM2">
    <property type="GO annotations" value="0 GO annotations based on evolutionary models"/>
</dbReference>
<dbReference type="PhylomeDB" id="Q6IPM2"/>
<dbReference type="TreeFam" id="TF351136"/>
<dbReference type="PathwayCommons" id="Q6IPM2"/>
<dbReference type="Reactome" id="R-HSA-5635838">
    <property type="pathway name" value="Activation of SMO"/>
</dbReference>
<dbReference type="SignaLink" id="Q6IPM2"/>
<dbReference type="BioGRID-ORCS" id="23288">
    <property type="hits" value="12 hits in 1155 CRISPR screens"/>
</dbReference>
<dbReference type="ChiTaRS" id="IQCE">
    <property type="organism name" value="human"/>
</dbReference>
<dbReference type="GeneWiki" id="IQCE"/>
<dbReference type="GenomeRNAi" id="23288"/>
<dbReference type="Pharos" id="Q6IPM2">
    <property type="development level" value="Tdark"/>
</dbReference>
<dbReference type="PRO" id="PR:Q6IPM2"/>
<dbReference type="Proteomes" id="UP000005640">
    <property type="component" value="Chromosome 7"/>
</dbReference>
<dbReference type="RNAct" id="Q6IPM2">
    <property type="molecule type" value="protein"/>
</dbReference>
<dbReference type="Bgee" id="ENSG00000106012">
    <property type="expression patterns" value="Expressed in left testis and 152 other cell types or tissues"/>
</dbReference>
<dbReference type="ExpressionAtlas" id="Q6IPM2">
    <property type="expression patterns" value="baseline and differential"/>
</dbReference>
<dbReference type="GO" id="GO:0060170">
    <property type="term" value="C:ciliary membrane"/>
    <property type="evidence" value="ECO:0007669"/>
    <property type="project" value="UniProtKB-SubCell"/>
</dbReference>
<dbReference type="GO" id="GO:0005929">
    <property type="term" value="C:cilium"/>
    <property type="evidence" value="ECO:0000304"/>
    <property type="project" value="Reactome"/>
</dbReference>
<dbReference type="GO" id="GO:0035108">
    <property type="term" value="P:limb morphogenesis"/>
    <property type="evidence" value="ECO:0000315"/>
    <property type="project" value="UniProtKB"/>
</dbReference>
<dbReference type="FunFam" id="1.20.5.190:FF:000025">
    <property type="entry name" value="IQ motif containing E"/>
    <property type="match status" value="1"/>
</dbReference>
<dbReference type="Gene3D" id="1.20.5.190">
    <property type="match status" value="1"/>
</dbReference>
<dbReference type="InterPro" id="IPR052318">
    <property type="entry name" value="CellDiv_DevSignal_Domain"/>
</dbReference>
<dbReference type="InterPro" id="IPR000048">
    <property type="entry name" value="IQ_motif_EF-hand-BS"/>
</dbReference>
<dbReference type="PANTHER" id="PTHR22590:SF3">
    <property type="entry name" value="IQ DOMAIN-CONTAINING PROTEIN E"/>
    <property type="match status" value="1"/>
</dbReference>
<dbReference type="PANTHER" id="PTHR22590">
    <property type="entry name" value="MYOSIN MOTOR DOMAIN-CONTAINING PROTEIN"/>
    <property type="match status" value="1"/>
</dbReference>
<dbReference type="Pfam" id="PF00612">
    <property type="entry name" value="IQ"/>
    <property type="match status" value="2"/>
</dbReference>
<dbReference type="SMART" id="SM00015">
    <property type="entry name" value="IQ"/>
    <property type="match status" value="2"/>
</dbReference>
<dbReference type="PROSITE" id="PS50096">
    <property type="entry name" value="IQ"/>
    <property type="match status" value="2"/>
</dbReference>
<reference key="1">
    <citation type="journal article" date="1999" name="DNA Res.">
        <title>Prediction of the coding sequences of unidentified human genes. XIV. The complete sequences of 100 new cDNA clones from brain which code for large proteins in vitro.</title>
        <authorList>
            <person name="Kikuno R."/>
            <person name="Nagase T."/>
            <person name="Ishikawa K."/>
            <person name="Hirosawa M."/>
            <person name="Miyajima N."/>
            <person name="Tanaka A."/>
            <person name="Kotani H."/>
            <person name="Nomura N."/>
            <person name="Ohara O."/>
        </authorList>
    </citation>
    <scope>NUCLEOTIDE SEQUENCE [LARGE SCALE MRNA] (ISOFORM 2)</scope>
    <scope>VARIANTS VAL-666 AND MET-690</scope>
    <source>
        <tissue>Brain</tissue>
    </source>
</reference>
<reference key="2">
    <citation type="journal article" date="2002" name="DNA Res.">
        <title>Construction of expression-ready cDNA clones for KIAA genes: manual curation of 330 KIAA cDNA clones.</title>
        <authorList>
            <person name="Nakajima D."/>
            <person name="Okazaki N."/>
            <person name="Yamakawa H."/>
            <person name="Kikuno R."/>
            <person name="Ohara O."/>
            <person name="Nagase T."/>
        </authorList>
    </citation>
    <scope>SEQUENCE REVISION</scope>
</reference>
<reference key="3">
    <citation type="journal article" date="2001" name="Genome Res.">
        <title>Towards a catalog of human genes and proteins: sequencing and analysis of 500 novel complete protein coding human cDNAs.</title>
        <authorList>
            <person name="Wiemann S."/>
            <person name="Weil B."/>
            <person name="Wellenreuther R."/>
            <person name="Gassenhuber J."/>
            <person name="Glassl S."/>
            <person name="Ansorge W."/>
            <person name="Boecher M."/>
            <person name="Bloecker H."/>
            <person name="Bauersachs S."/>
            <person name="Blum H."/>
            <person name="Lauber J."/>
            <person name="Duesterhoeft A."/>
            <person name="Beyer A."/>
            <person name="Koehrer K."/>
            <person name="Strack N."/>
            <person name="Mewes H.-W."/>
            <person name="Ottenwaelder B."/>
            <person name="Obermaier B."/>
            <person name="Tampe J."/>
            <person name="Heubner D."/>
            <person name="Wambutt R."/>
            <person name="Korn B."/>
            <person name="Klein M."/>
            <person name="Poustka A."/>
        </authorList>
    </citation>
    <scope>NUCLEOTIDE SEQUENCE [LARGE SCALE MRNA] (ISOFORM 3)</scope>
    <source>
        <tissue>Testis</tissue>
    </source>
</reference>
<reference key="4">
    <citation type="journal article" date="2004" name="Genome Res.">
        <title>The status, quality, and expansion of the NIH full-length cDNA project: the Mammalian Gene Collection (MGC).</title>
        <authorList>
            <consortium name="The MGC Project Team"/>
        </authorList>
    </citation>
    <scope>NUCLEOTIDE SEQUENCE [LARGE SCALE MRNA] (ISOFORMS 1 AND 2)</scope>
    <scope>NUCLEOTIDE SEQUENCE [LARGE SCALE MRNA] OF 1-464 (ISOFORM 4)</scope>
    <source>
        <tissue>Brain</tissue>
        <tissue>Testis</tissue>
        <tissue>Uterus</tissue>
    </source>
</reference>
<reference key="5">
    <citation type="journal article" date="2009" name="Sci. Signal.">
        <title>Quantitative phosphoproteomic analysis of T cell receptor signaling reveals system-wide modulation of protein-protein interactions.</title>
        <authorList>
            <person name="Mayya V."/>
            <person name="Lundgren D.H."/>
            <person name="Hwang S.-I."/>
            <person name="Rezaul K."/>
            <person name="Wu L."/>
            <person name="Eng J.K."/>
            <person name="Rodionov V."/>
            <person name="Han D.K."/>
        </authorList>
    </citation>
    <scope>IDENTIFICATION BY MASS SPECTROMETRY [LARGE SCALE ANALYSIS]</scope>
    <source>
        <tissue>Leukemic T-cell</tissue>
    </source>
</reference>
<reference key="6">
    <citation type="journal article" date="2013" name="J. Proteome Res.">
        <title>Toward a comprehensive characterization of a human cancer cell phosphoproteome.</title>
        <authorList>
            <person name="Zhou H."/>
            <person name="Di Palma S."/>
            <person name="Preisinger C."/>
            <person name="Peng M."/>
            <person name="Polat A.N."/>
            <person name="Heck A.J."/>
            <person name="Mohammed S."/>
        </authorList>
    </citation>
    <scope>IDENTIFICATION BY MASS SPECTROMETRY [LARGE SCALE ANALYSIS]</scope>
    <source>
        <tissue>Cervix carcinoma</tissue>
    </source>
</reference>
<reference key="7">
    <citation type="journal article" date="2017" name="Eur. J. Hum. Genet.">
        <title>Exome sequencing revealed a splice site variant in the IQCE gene underlying post-axial polydactyly type A restricted to lower limb.</title>
        <authorList>
            <person name="Umair M."/>
            <person name="Shah K."/>
            <person name="Alhaddad B."/>
            <person name="Haack T.B."/>
            <person name="Graf E."/>
            <person name="Strom T.M."/>
            <person name="Meitinger T."/>
            <person name="Ahmad W."/>
        </authorList>
    </citation>
    <scope>FUNCTION</scope>
    <scope>INVOLVEMENT IN PAPA7</scope>
</reference>